<reference key="1">
    <citation type="submission" date="2008-02" db="EMBL/GenBank/DDBJ databases">
        <title>Complete sequence of Yersinia pseudotuberculosis YPIII.</title>
        <authorList>
            <consortium name="US DOE Joint Genome Institute"/>
            <person name="Copeland A."/>
            <person name="Lucas S."/>
            <person name="Lapidus A."/>
            <person name="Glavina del Rio T."/>
            <person name="Dalin E."/>
            <person name="Tice H."/>
            <person name="Bruce D."/>
            <person name="Goodwin L."/>
            <person name="Pitluck S."/>
            <person name="Munk A.C."/>
            <person name="Brettin T."/>
            <person name="Detter J.C."/>
            <person name="Han C."/>
            <person name="Tapia R."/>
            <person name="Schmutz J."/>
            <person name="Larimer F."/>
            <person name="Land M."/>
            <person name="Hauser L."/>
            <person name="Challacombe J.F."/>
            <person name="Green L."/>
            <person name="Lindler L.E."/>
            <person name="Nikolich M.P."/>
            <person name="Richardson P."/>
        </authorList>
    </citation>
    <scope>NUCLEOTIDE SEQUENCE [LARGE SCALE GENOMIC DNA]</scope>
    <source>
        <strain>YPIII</strain>
    </source>
</reference>
<dbReference type="EC" id="6.3.2.-" evidence="1"/>
<dbReference type="EMBL" id="CP000950">
    <property type="protein sequence ID" value="ACA70078.1"/>
    <property type="molecule type" value="Genomic_DNA"/>
</dbReference>
<dbReference type="RefSeq" id="WP_002209139.1">
    <property type="nucleotide sequence ID" value="NZ_CP009792.1"/>
</dbReference>
<dbReference type="SMR" id="B1JMQ1"/>
<dbReference type="GeneID" id="57974246"/>
<dbReference type="KEGG" id="ypy:YPK_3812"/>
<dbReference type="PATRIC" id="fig|502800.11.peg.159"/>
<dbReference type="GO" id="GO:0005829">
    <property type="term" value="C:cytosol"/>
    <property type="evidence" value="ECO:0007669"/>
    <property type="project" value="TreeGrafter"/>
</dbReference>
<dbReference type="GO" id="GO:0016880">
    <property type="term" value="F:acid-ammonia (or amide) ligase activity"/>
    <property type="evidence" value="ECO:0007669"/>
    <property type="project" value="UniProtKB-UniRule"/>
</dbReference>
<dbReference type="GO" id="GO:0005524">
    <property type="term" value="F:ATP binding"/>
    <property type="evidence" value="ECO:0007669"/>
    <property type="project" value="UniProtKB-UniRule"/>
</dbReference>
<dbReference type="GO" id="GO:0004824">
    <property type="term" value="F:lysine-tRNA ligase activity"/>
    <property type="evidence" value="ECO:0007669"/>
    <property type="project" value="InterPro"/>
</dbReference>
<dbReference type="GO" id="GO:0000049">
    <property type="term" value="F:tRNA binding"/>
    <property type="evidence" value="ECO:0007669"/>
    <property type="project" value="TreeGrafter"/>
</dbReference>
<dbReference type="GO" id="GO:0006430">
    <property type="term" value="P:lysyl-tRNA aminoacylation"/>
    <property type="evidence" value="ECO:0007669"/>
    <property type="project" value="InterPro"/>
</dbReference>
<dbReference type="FunFam" id="3.30.930.10:FF:000017">
    <property type="entry name" value="Elongation factor P--(R)-beta-lysine ligase"/>
    <property type="match status" value="1"/>
</dbReference>
<dbReference type="Gene3D" id="3.30.930.10">
    <property type="entry name" value="Bira Bifunctional Protein, Domain 2"/>
    <property type="match status" value="1"/>
</dbReference>
<dbReference type="HAMAP" id="MF_00174">
    <property type="entry name" value="EF_P_modif_A"/>
    <property type="match status" value="1"/>
</dbReference>
<dbReference type="InterPro" id="IPR004364">
    <property type="entry name" value="Aa-tRNA-synt_II"/>
</dbReference>
<dbReference type="InterPro" id="IPR006195">
    <property type="entry name" value="aa-tRNA-synth_II"/>
</dbReference>
<dbReference type="InterPro" id="IPR045864">
    <property type="entry name" value="aa-tRNA-synth_II/BPL/LPL"/>
</dbReference>
<dbReference type="InterPro" id="IPR004525">
    <property type="entry name" value="EpmA"/>
</dbReference>
<dbReference type="InterPro" id="IPR018149">
    <property type="entry name" value="Lys-tRNA-synth_II_C"/>
</dbReference>
<dbReference type="NCBIfam" id="TIGR00462">
    <property type="entry name" value="genX"/>
    <property type="match status" value="1"/>
</dbReference>
<dbReference type="NCBIfam" id="NF006828">
    <property type="entry name" value="PRK09350.1"/>
    <property type="match status" value="1"/>
</dbReference>
<dbReference type="PANTHER" id="PTHR42918:SF6">
    <property type="entry name" value="ELONGATION FACTOR P--(R)-BETA-LYSINE LIGASE"/>
    <property type="match status" value="1"/>
</dbReference>
<dbReference type="PANTHER" id="PTHR42918">
    <property type="entry name" value="LYSYL-TRNA SYNTHETASE"/>
    <property type="match status" value="1"/>
</dbReference>
<dbReference type="Pfam" id="PF00152">
    <property type="entry name" value="tRNA-synt_2"/>
    <property type="match status" value="1"/>
</dbReference>
<dbReference type="PRINTS" id="PR00982">
    <property type="entry name" value="TRNASYNTHLYS"/>
</dbReference>
<dbReference type="SUPFAM" id="SSF55681">
    <property type="entry name" value="Class II aaRS and biotin synthetases"/>
    <property type="match status" value="1"/>
</dbReference>
<dbReference type="PROSITE" id="PS50862">
    <property type="entry name" value="AA_TRNA_LIGASE_II"/>
    <property type="match status" value="1"/>
</dbReference>
<accession>B1JMQ1</accession>
<gene>
    <name evidence="1" type="primary">epmA</name>
    <name type="synonym">yjeA</name>
    <name type="ordered locus">YPK_3812</name>
</gene>
<feature type="chain" id="PRO_1000097915" description="Elongation factor P--(R)-beta-lysine ligase">
    <location>
        <begin position="1"/>
        <end position="325"/>
    </location>
</feature>
<feature type="binding site" evidence="1">
    <location>
        <begin position="76"/>
        <end position="78"/>
    </location>
    <ligand>
        <name>substrate</name>
    </ligand>
</feature>
<feature type="binding site" evidence="1">
    <location>
        <begin position="100"/>
        <end position="102"/>
    </location>
    <ligand>
        <name>ATP</name>
        <dbReference type="ChEBI" id="CHEBI:30616"/>
    </ligand>
</feature>
<feature type="binding site" evidence="1">
    <location>
        <position position="109"/>
    </location>
    <ligand>
        <name>ATP</name>
        <dbReference type="ChEBI" id="CHEBI:30616"/>
    </ligand>
</feature>
<feature type="binding site" evidence="1">
    <location>
        <position position="118"/>
    </location>
    <ligand>
        <name>substrate</name>
    </ligand>
</feature>
<feature type="binding site" evidence="1">
    <location>
        <begin position="244"/>
        <end position="245"/>
    </location>
    <ligand>
        <name>ATP</name>
        <dbReference type="ChEBI" id="CHEBI:30616"/>
    </ligand>
</feature>
<feature type="binding site" evidence="1">
    <location>
        <position position="251"/>
    </location>
    <ligand>
        <name>substrate</name>
    </ligand>
</feature>
<feature type="binding site" evidence="1">
    <location>
        <position position="300"/>
    </location>
    <ligand>
        <name>ATP</name>
        <dbReference type="ChEBI" id="CHEBI:30616"/>
    </ligand>
</feature>
<keyword id="KW-0067">ATP-binding</keyword>
<keyword id="KW-0436">Ligase</keyword>
<keyword id="KW-0547">Nucleotide-binding</keyword>
<proteinExistence type="inferred from homology"/>
<sequence length="325" mass="36700">MSDTASWQPSAPIANLLKRAAIMAEIRRFFADRGVLEVETPTMSQATVTDIHLVPFETRFVGPGAADGLTLYMMTSPEYHMKRLLAAGSGPIYQLGRSFRNEEAGRYHNPEFTMLEWYRPHYDMYRLMNEVDDLLQQILDCNSAETLSYQQAFLRHLNIDPLSAEKAQLREVAAKLDLSNIADTEEDRDTLLQLLFTVGVEPYIGRDKPAFIYHFPASQASLAEISTEDHRVAERFEVYFKGIELANGFRELTDGDEQLQRFEQDNRNRAKRGLPQNPIDMNLIAALKQGLPDCSGVALGVDRLVMLALNAERLSDVIAFPVNIA</sequence>
<comment type="function">
    <text evidence="1">With EpmB is involved in the beta-lysylation step of the post-translational modification of translation elongation factor P (EF-P). Catalyzes the ATP-dependent activation of (R)-beta-lysine produced by EpmB, forming a lysyl-adenylate, from which the beta-lysyl moiety is then transferred to the epsilon-amino group of a conserved specific lysine residue in EF-P.</text>
</comment>
<comment type="catalytic activity">
    <reaction evidence="1">
        <text>D-beta-lysine + L-lysyl-[protein] + ATP = N(6)-((3R)-3,6-diaminohexanoyl)-L-lysyl-[protein] + AMP + diphosphate + H(+)</text>
        <dbReference type="Rhea" id="RHEA:83435"/>
        <dbReference type="Rhea" id="RHEA-COMP:9752"/>
        <dbReference type="Rhea" id="RHEA-COMP:20131"/>
        <dbReference type="ChEBI" id="CHEBI:15378"/>
        <dbReference type="ChEBI" id="CHEBI:29969"/>
        <dbReference type="ChEBI" id="CHEBI:30616"/>
        <dbReference type="ChEBI" id="CHEBI:33019"/>
        <dbReference type="ChEBI" id="CHEBI:84138"/>
        <dbReference type="ChEBI" id="CHEBI:156053"/>
        <dbReference type="ChEBI" id="CHEBI:456215"/>
    </reaction>
    <physiologicalReaction direction="left-to-right" evidence="1">
        <dbReference type="Rhea" id="RHEA:83436"/>
    </physiologicalReaction>
</comment>
<comment type="subunit">
    <text evidence="1">Homodimer.</text>
</comment>
<comment type="similarity">
    <text evidence="1">Belongs to the class-II aminoacyl-tRNA synthetase family. EpmA subfamily.</text>
</comment>
<evidence type="ECO:0000255" key="1">
    <source>
        <dbReference type="HAMAP-Rule" id="MF_00174"/>
    </source>
</evidence>
<protein>
    <recommendedName>
        <fullName evidence="1">Elongation factor P--(R)-beta-lysine ligase</fullName>
        <shortName evidence="1">EF-P--(R)-beta-lysine ligase</shortName>
        <ecNumber evidence="1">6.3.2.-</ecNumber>
    </recommendedName>
    <alternativeName>
        <fullName evidence="1">EF-P post-translational modification enzyme A</fullName>
    </alternativeName>
    <alternativeName>
        <fullName evidence="1">EF-P-lysine lysyltransferase</fullName>
    </alternativeName>
</protein>
<organism>
    <name type="scientific">Yersinia pseudotuberculosis serotype O:3 (strain YPIII)</name>
    <dbReference type="NCBI Taxonomy" id="502800"/>
    <lineage>
        <taxon>Bacteria</taxon>
        <taxon>Pseudomonadati</taxon>
        <taxon>Pseudomonadota</taxon>
        <taxon>Gammaproteobacteria</taxon>
        <taxon>Enterobacterales</taxon>
        <taxon>Yersiniaceae</taxon>
        <taxon>Yersinia</taxon>
    </lineage>
</organism>
<name>EPMA_YERPY</name>